<comment type="function">
    <text evidence="1">Catalyzes the formation of N(7)-methylguanine at position 46 (m7G46) in tRNA.</text>
</comment>
<comment type="catalytic activity">
    <reaction evidence="1">
        <text>guanosine(46) in tRNA + S-adenosyl-L-methionine = N(7)-methylguanosine(46) in tRNA + S-adenosyl-L-homocysteine</text>
        <dbReference type="Rhea" id="RHEA:42708"/>
        <dbReference type="Rhea" id="RHEA-COMP:10188"/>
        <dbReference type="Rhea" id="RHEA-COMP:10189"/>
        <dbReference type="ChEBI" id="CHEBI:57856"/>
        <dbReference type="ChEBI" id="CHEBI:59789"/>
        <dbReference type="ChEBI" id="CHEBI:74269"/>
        <dbReference type="ChEBI" id="CHEBI:74480"/>
        <dbReference type="EC" id="2.1.1.33"/>
    </reaction>
</comment>
<comment type="pathway">
    <text evidence="1">tRNA modification; N(7)-methylguanine-tRNA biosynthesis.</text>
</comment>
<comment type="subunit">
    <text evidence="1">Forms a complex with trm82.</text>
</comment>
<comment type="subcellular location">
    <subcellularLocation>
        <location evidence="1">Nucleus</location>
    </subcellularLocation>
</comment>
<comment type="similarity">
    <text evidence="1">Belongs to the class I-like SAM-binding methyltransferase superfamily. TrmB family.</text>
</comment>
<reference key="1">
    <citation type="journal article" date="2005" name="Nature">
        <title>Genomic sequence of the pathogenic and allergenic filamentous fungus Aspergillus fumigatus.</title>
        <authorList>
            <person name="Nierman W.C."/>
            <person name="Pain A."/>
            <person name="Anderson M.J."/>
            <person name="Wortman J.R."/>
            <person name="Kim H.S."/>
            <person name="Arroyo J."/>
            <person name="Berriman M."/>
            <person name="Abe K."/>
            <person name="Archer D.B."/>
            <person name="Bermejo C."/>
            <person name="Bennett J.W."/>
            <person name="Bowyer P."/>
            <person name="Chen D."/>
            <person name="Collins M."/>
            <person name="Coulsen R."/>
            <person name="Davies R."/>
            <person name="Dyer P.S."/>
            <person name="Farman M.L."/>
            <person name="Fedorova N."/>
            <person name="Fedorova N.D."/>
            <person name="Feldblyum T.V."/>
            <person name="Fischer R."/>
            <person name="Fosker N."/>
            <person name="Fraser A."/>
            <person name="Garcia J.L."/>
            <person name="Garcia M.J."/>
            <person name="Goble A."/>
            <person name="Goldman G.H."/>
            <person name="Gomi K."/>
            <person name="Griffith-Jones S."/>
            <person name="Gwilliam R."/>
            <person name="Haas B.J."/>
            <person name="Haas H."/>
            <person name="Harris D.E."/>
            <person name="Horiuchi H."/>
            <person name="Huang J."/>
            <person name="Humphray S."/>
            <person name="Jimenez J."/>
            <person name="Keller N."/>
            <person name="Khouri H."/>
            <person name="Kitamoto K."/>
            <person name="Kobayashi T."/>
            <person name="Konzack S."/>
            <person name="Kulkarni R."/>
            <person name="Kumagai T."/>
            <person name="Lafton A."/>
            <person name="Latge J.-P."/>
            <person name="Li W."/>
            <person name="Lord A."/>
            <person name="Lu C."/>
            <person name="Majoros W.H."/>
            <person name="May G.S."/>
            <person name="Miller B.L."/>
            <person name="Mohamoud Y."/>
            <person name="Molina M."/>
            <person name="Monod M."/>
            <person name="Mouyna I."/>
            <person name="Mulligan S."/>
            <person name="Murphy L.D."/>
            <person name="O'Neil S."/>
            <person name="Paulsen I."/>
            <person name="Penalva M.A."/>
            <person name="Pertea M."/>
            <person name="Price C."/>
            <person name="Pritchard B.L."/>
            <person name="Quail M.A."/>
            <person name="Rabbinowitsch E."/>
            <person name="Rawlins N."/>
            <person name="Rajandream M.A."/>
            <person name="Reichard U."/>
            <person name="Renauld H."/>
            <person name="Robson G.D."/>
            <person name="Rodriguez de Cordoba S."/>
            <person name="Rodriguez-Pena J.M."/>
            <person name="Ronning C.M."/>
            <person name="Rutter S."/>
            <person name="Salzberg S.L."/>
            <person name="Sanchez M."/>
            <person name="Sanchez-Ferrero J.C."/>
            <person name="Saunders D."/>
            <person name="Seeger K."/>
            <person name="Squares R."/>
            <person name="Squares S."/>
            <person name="Takeuchi M."/>
            <person name="Tekaia F."/>
            <person name="Turner G."/>
            <person name="Vazquez de Aldana C.R."/>
            <person name="Weidman J."/>
            <person name="White O."/>
            <person name="Woodward J.R."/>
            <person name="Yu J.-H."/>
            <person name="Fraser C.M."/>
            <person name="Galagan J.E."/>
            <person name="Asai K."/>
            <person name="Machida M."/>
            <person name="Hall N."/>
            <person name="Barrell B.G."/>
            <person name="Denning D.W."/>
        </authorList>
    </citation>
    <scope>NUCLEOTIDE SEQUENCE [LARGE SCALE GENOMIC DNA]</scope>
    <source>
        <strain>ATCC MYA-4609 / CBS 101355 / FGSC A1100 / Af293</strain>
    </source>
</reference>
<dbReference type="EC" id="2.1.1.33" evidence="1"/>
<dbReference type="EMBL" id="AAHF01000005">
    <property type="protein sequence ID" value="EAL89565.1"/>
    <property type="molecule type" value="Genomic_DNA"/>
</dbReference>
<dbReference type="RefSeq" id="XP_751603.1">
    <property type="nucleotide sequence ID" value="XM_746510.1"/>
</dbReference>
<dbReference type="SMR" id="Q4WQB9"/>
<dbReference type="FunCoup" id="Q4WQB9">
    <property type="interactions" value="524"/>
</dbReference>
<dbReference type="STRING" id="330879.Q4WQB9"/>
<dbReference type="EnsemblFungi" id="EAL89565">
    <property type="protein sequence ID" value="EAL89565"/>
    <property type="gene ID" value="AFUA_4G12280"/>
</dbReference>
<dbReference type="GeneID" id="3509169"/>
<dbReference type="KEGG" id="afm:AFUA_4G12280"/>
<dbReference type="VEuPathDB" id="FungiDB:Afu4g12280"/>
<dbReference type="eggNOG" id="KOG3115">
    <property type="taxonomic scope" value="Eukaryota"/>
</dbReference>
<dbReference type="HOGENOM" id="CLU_050910_3_1_1"/>
<dbReference type="InParanoid" id="Q4WQB9"/>
<dbReference type="OMA" id="LPNYFAK"/>
<dbReference type="OrthoDB" id="47276at2759"/>
<dbReference type="UniPathway" id="UPA00989"/>
<dbReference type="Proteomes" id="UP000002530">
    <property type="component" value="Chromosome 4"/>
</dbReference>
<dbReference type="GO" id="GO:0005634">
    <property type="term" value="C:nucleus"/>
    <property type="evidence" value="ECO:0007669"/>
    <property type="project" value="UniProtKB-SubCell"/>
</dbReference>
<dbReference type="GO" id="GO:0043527">
    <property type="term" value="C:tRNA methyltransferase complex"/>
    <property type="evidence" value="ECO:0000318"/>
    <property type="project" value="GO_Central"/>
</dbReference>
<dbReference type="GO" id="GO:0008176">
    <property type="term" value="F:tRNA (guanine(46)-N7)-methyltransferase activity"/>
    <property type="evidence" value="ECO:0000318"/>
    <property type="project" value="GO_Central"/>
</dbReference>
<dbReference type="GO" id="GO:0000049">
    <property type="term" value="F:tRNA binding"/>
    <property type="evidence" value="ECO:0007669"/>
    <property type="project" value="UniProtKB-UniRule"/>
</dbReference>
<dbReference type="GO" id="GO:0036265">
    <property type="term" value="P:RNA (guanine-N7)-methylation"/>
    <property type="evidence" value="ECO:0000318"/>
    <property type="project" value="GO_Central"/>
</dbReference>
<dbReference type="GO" id="GO:0030488">
    <property type="term" value="P:tRNA methylation"/>
    <property type="evidence" value="ECO:0000318"/>
    <property type="project" value="GO_Central"/>
</dbReference>
<dbReference type="Gene3D" id="3.40.50.150">
    <property type="entry name" value="Vaccinia Virus protein VP39"/>
    <property type="match status" value="1"/>
</dbReference>
<dbReference type="HAMAP" id="MF_03055">
    <property type="entry name" value="tRNA_methyltr_TrmB_euk"/>
    <property type="match status" value="1"/>
</dbReference>
<dbReference type="InterPro" id="IPR029063">
    <property type="entry name" value="SAM-dependent_MTases_sf"/>
</dbReference>
<dbReference type="InterPro" id="IPR025763">
    <property type="entry name" value="Trm8_euk"/>
</dbReference>
<dbReference type="InterPro" id="IPR003358">
    <property type="entry name" value="tRNA_(Gua-N-7)_MeTrfase_Trmb"/>
</dbReference>
<dbReference type="PANTHER" id="PTHR23417">
    <property type="entry name" value="3-DEOXY-D-MANNO-OCTULOSONIC-ACID TRANSFERASE/TRNA GUANINE-N 7 - -METHYLTRANSFERASE"/>
    <property type="match status" value="1"/>
</dbReference>
<dbReference type="PANTHER" id="PTHR23417:SF16">
    <property type="entry name" value="TRNA (GUANINE-N(7)-)-METHYLTRANSFERASE"/>
    <property type="match status" value="1"/>
</dbReference>
<dbReference type="Pfam" id="PF02390">
    <property type="entry name" value="Methyltransf_4"/>
    <property type="match status" value="2"/>
</dbReference>
<dbReference type="SUPFAM" id="SSF53335">
    <property type="entry name" value="S-adenosyl-L-methionine-dependent methyltransferases"/>
    <property type="match status" value="1"/>
</dbReference>
<dbReference type="PROSITE" id="PS51625">
    <property type="entry name" value="SAM_MT_TRMB"/>
    <property type="match status" value="1"/>
</dbReference>
<organism>
    <name type="scientific">Aspergillus fumigatus (strain ATCC MYA-4609 / CBS 101355 / FGSC A1100 / Af293)</name>
    <name type="common">Neosartorya fumigata</name>
    <dbReference type="NCBI Taxonomy" id="330879"/>
    <lineage>
        <taxon>Eukaryota</taxon>
        <taxon>Fungi</taxon>
        <taxon>Dikarya</taxon>
        <taxon>Ascomycota</taxon>
        <taxon>Pezizomycotina</taxon>
        <taxon>Eurotiomycetes</taxon>
        <taxon>Eurotiomycetidae</taxon>
        <taxon>Eurotiales</taxon>
        <taxon>Aspergillaceae</taxon>
        <taxon>Aspergillus</taxon>
        <taxon>Aspergillus subgen. Fumigati</taxon>
    </lineage>
</organism>
<gene>
    <name type="primary">trm8</name>
    <name type="ORF">AFUA_4G12280</name>
</gene>
<sequence length="358" mass="39946">MTPPPPKRQKRDEYRKATAEATSQSGASDVAEIKLPKKKYYRQRAHANPFSDHHLKYPLSPAHMDWSSHYPAFVNPDPSHINLAGARRLLKDVEVVDIGCGFGGLLIGLAPLLPESLIVGMEIRVSVLEYVTTRIQALRAQQQKLRAATATATAASETPSQQQAQIDGKQANANAAADAASPAPSTDTEHMPTTLVPGSYENISAIRSNTMKFFPNFFARHQLSKIFICFPDPHFKARKHKARIISETLNAEYAYALRPGGLLYTITDVEEYHHWILRHFGVELGAEEESEEKSTSPNANANAGVRELFERVSEEELEKDECVRVMKEATEEGKKVARNKGNKYVAVFRRKTDPEWPA</sequence>
<accession>Q4WQB9</accession>
<proteinExistence type="inferred from homology"/>
<keyword id="KW-0489">Methyltransferase</keyword>
<keyword id="KW-0539">Nucleus</keyword>
<keyword id="KW-1185">Reference proteome</keyword>
<keyword id="KW-0694">RNA-binding</keyword>
<keyword id="KW-0949">S-adenosyl-L-methionine</keyword>
<keyword id="KW-0808">Transferase</keyword>
<keyword id="KW-0819">tRNA processing</keyword>
<keyword id="KW-0820">tRNA-binding</keyword>
<name>TRMB_ASPFU</name>
<protein>
    <recommendedName>
        <fullName evidence="1">tRNA (guanine-N(7)-)-methyltransferase</fullName>
        <ecNumber evidence="1">2.1.1.33</ecNumber>
    </recommendedName>
    <alternativeName>
        <fullName evidence="1">Transfer RNA methyltransferase 8</fullName>
    </alternativeName>
    <alternativeName>
        <fullName evidence="1">tRNA (guanine(46)-N(7))-methyltransferase</fullName>
    </alternativeName>
    <alternativeName>
        <fullName evidence="1">tRNA(m7G46)-methyltransferase</fullName>
    </alternativeName>
</protein>
<evidence type="ECO:0000255" key="1">
    <source>
        <dbReference type="HAMAP-Rule" id="MF_03055"/>
    </source>
</evidence>
<evidence type="ECO:0000256" key="2">
    <source>
        <dbReference type="SAM" id="MobiDB-lite"/>
    </source>
</evidence>
<feature type="chain" id="PRO_0000370586" description="tRNA (guanine-N(7)-)-methyltransferase">
    <location>
        <begin position="1"/>
        <end position="358"/>
    </location>
</feature>
<feature type="region of interest" description="Disordered" evidence="2">
    <location>
        <begin position="1"/>
        <end position="29"/>
    </location>
</feature>
<feature type="region of interest" description="Disordered" evidence="2">
    <location>
        <begin position="151"/>
        <end position="194"/>
    </location>
</feature>
<feature type="compositionally biased region" description="Low complexity" evidence="2">
    <location>
        <begin position="151"/>
        <end position="186"/>
    </location>
</feature>
<feature type="active site" evidence="1">
    <location>
        <position position="232"/>
    </location>
</feature>
<feature type="binding site" evidence="1">
    <location>
        <position position="99"/>
    </location>
    <ligand>
        <name>S-adenosyl-L-methionine</name>
        <dbReference type="ChEBI" id="CHEBI:59789"/>
    </ligand>
</feature>
<feature type="binding site" evidence="1">
    <location>
        <begin position="122"/>
        <end position="123"/>
    </location>
    <ligand>
        <name>S-adenosyl-L-methionine</name>
        <dbReference type="ChEBI" id="CHEBI:59789"/>
    </ligand>
</feature>
<feature type="binding site" evidence="1">
    <location>
        <begin position="209"/>
        <end position="210"/>
    </location>
    <ligand>
        <name>S-adenosyl-L-methionine</name>
        <dbReference type="ChEBI" id="CHEBI:59789"/>
    </ligand>
</feature>
<feature type="binding site" evidence="1">
    <location>
        <position position="229"/>
    </location>
    <ligand>
        <name>S-adenosyl-L-methionine</name>
        <dbReference type="ChEBI" id="CHEBI:59789"/>
    </ligand>
</feature>
<feature type="binding site" evidence="1">
    <location>
        <begin position="330"/>
        <end position="332"/>
    </location>
    <ligand>
        <name>S-adenosyl-L-methionine</name>
        <dbReference type="ChEBI" id="CHEBI:59789"/>
    </ligand>
</feature>